<dbReference type="EMBL" id="AL603828">
    <property type="status" value="NOT_ANNOTATED_CDS"/>
    <property type="molecule type" value="Genomic_DNA"/>
</dbReference>
<dbReference type="CCDS" id="CCDS36371.1"/>
<dbReference type="RefSeq" id="NP_001074398.1">
    <property type="nucleotide sequence ID" value="NM_001080929.1"/>
</dbReference>
<dbReference type="SMR" id="A2A6T1"/>
<dbReference type="FunCoup" id="A2A6T1">
    <property type="interactions" value="25"/>
</dbReference>
<dbReference type="STRING" id="10090.ENSMUSP00000052096"/>
<dbReference type="iPTMnet" id="A2A6T1"/>
<dbReference type="PhosphoSitePlus" id="A2A6T1"/>
<dbReference type="jPOST" id="A2A6T1"/>
<dbReference type="PaxDb" id="10090-ENSMUSP00000052096"/>
<dbReference type="PeptideAtlas" id="A2A6T1"/>
<dbReference type="ProteomicsDB" id="281358"/>
<dbReference type="Pumba" id="A2A6T1"/>
<dbReference type="Antibodypedia" id="19492">
    <property type="antibodies" value="100 antibodies from 20 providers"/>
</dbReference>
<dbReference type="Ensembl" id="ENSMUST00000053288.6">
    <property type="protein sequence ID" value="ENSMUSP00000052096.6"/>
    <property type="gene ID" value="ENSMUSG00000050910.6"/>
</dbReference>
<dbReference type="GeneID" id="237988"/>
<dbReference type="KEGG" id="mmu:237988"/>
<dbReference type="UCSC" id="uc007mhi.1">
    <property type="organism name" value="mouse"/>
</dbReference>
<dbReference type="AGR" id="MGI:2684867"/>
<dbReference type="CTD" id="30850"/>
<dbReference type="MGI" id="MGI:2684867">
    <property type="gene designation" value="Cdr2l"/>
</dbReference>
<dbReference type="VEuPathDB" id="HostDB:ENSMUSG00000050910"/>
<dbReference type="eggNOG" id="ENOG502QRN3">
    <property type="taxonomic scope" value="Eukaryota"/>
</dbReference>
<dbReference type="GeneTree" id="ENSGT00390000018570"/>
<dbReference type="HOGENOM" id="CLU_048751_0_0_1"/>
<dbReference type="InParanoid" id="A2A6T1"/>
<dbReference type="OMA" id="MKDCAVG"/>
<dbReference type="OrthoDB" id="10059415at2759"/>
<dbReference type="PhylomeDB" id="A2A6T1"/>
<dbReference type="TreeFam" id="TF326183"/>
<dbReference type="BioGRID-ORCS" id="237988">
    <property type="hits" value="6 hits in 83 CRISPR screens"/>
</dbReference>
<dbReference type="ChiTaRS" id="Cdr2l">
    <property type="organism name" value="mouse"/>
</dbReference>
<dbReference type="PRO" id="PR:A2A6T1"/>
<dbReference type="Proteomes" id="UP000000589">
    <property type="component" value="Chromosome 11"/>
</dbReference>
<dbReference type="RNAct" id="A2A6T1">
    <property type="molecule type" value="protein"/>
</dbReference>
<dbReference type="Bgee" id="ENSMUSG00000050910">
    <property type="expression patterns" value="Expressed in choroid plexus of fourth ventricle and 249 other cell types or tissues"/>
</dbReference>
<dbReference type="GO" id="GO:0042802">
    <property type="term" value="F:identical protein binding"/>
    <property type="evidence" value="ECO:0007669"/>
    <property type="project" value="Ensembl"/>
</dbReference>
<dbReference type="InterPro" id="IPR026079">
    <property type="entry name" value="CDR2"/>
</dbReference>
<dbReference type="PANTHER" id="PTHR19232">
    <property type="entry name" value="CENTROCORTIN FAMILY MEMBER"/>
    <property type="match status" value="1"/>
</dbReference>
<dbReference type="PANTHER" id="PTHR19232:SF10">
    <property type="entry name" value="CEREBELLAR DEGENERATION-RELATED PROTEIN 2-LIKE"/>
    <property type="match status" value="1"/>
</dbReference>
<name>CDR2L_MOUSE</name>
<protein>
    <recommendedName>
        <fullName>Cerebellar degeneration-related protein 2-like</fullName>
    </recommendedName>
</protein>
<organism>
    <name type="scientific">Mus musculus</name>
    <name type="common">Mouse</name>
    <dbReference type="NCBI Taxonomy" id="10090"/>
    <lineage>
        <taxon>Eukaryota</taxon>
        <taxon>Metazoa</taxon>
        <taxon>Chordata</taxon>
        <taxon>Craniata</taxon>
        <taxon>Vertebrata</taxon>
        <taxon>Euteleostomi</taxon>
        <taxon>Mammalia</taxon>
        <taxon>Eutheria</taxon>
        <taxon>Euarchontoglires</taxon>
        <taxon>Glires</taxon>
        <taxon>Rodentia</taxon>
        <taxon>Myomorpha</taxon>
        <taxon>Muroidea</taxon>
        <taxon>Muridae</taxon>
        <taxon>Murinae</taxon>
        <taxon>Mus</taxon>
        <taxon>Mus</taxon>
    </lineage>
</organism>
<reference key="1">
    <citation type="journal article" date="2009" name="PLoS Biol.">
        <title>Lineage-specific biology revealed by a finished genome assembly of the mouse.</title>
        <authorList>
            <person name="Church D.M."/>
            <person name="Goodstadt L."/>
            <person name="Hillier L.W."/>
            <person name="Zody M.C."/>
            <person name="Goldstein S."/>
            <person name="She X."/>
            <person name="Bult C.J."/>
            <person name="Agarwala R."/>
            <person name="Cherry J.L."/>
            <person name="DiCuccio M."/>
            <person name="Hlavina W."/>
            <person name="Kapustin Y."/>
            <person name="Meric P."/>
            <person name="Maglott D."/>
            <person name="Birtle Z."/>
            <person name="Marques A.C."/>
            <person name="Graves T."/>
            <person name="Zhou S."/>
            <person name="Teague B."/>
            <person name="Potamousis K."/>
            <person name="Churas C."/>
            <person name="Place M."/>
            <person name="Herschleb J."/>
            <person name="Runnheim R."/>
            <person name="Forrest D."/>
            <person name="Amos-Landgraf J."/>
            <person name="Schwartz D.C."/>
            <person name="Cheng Z."/>
            <person name="Lindblad-Toh K."/>
            <person name="Eichler E.E."/>
            <person name="Ponting C.P."/>
        </authorList>
    </citation>
    <scope>NUCLEOTIDE SEQUENCE [LARGE SCALE GENOMIC DNA]</scope>
    <source>
        <strain>C57BL/6J</strain>
    </source>
</reference>
<reference key="2">
    <citation type="journal article" date="2010" name="Cell">
        <title>A tissue-specific atlas of mouse protein phosphorylation and expression.</title>
        <authorList>
            <person name="Huttlin E.L."/>
            <person name="Jedrychowski M.P."/>
            <person name="Elias J.E."/>
            <person name="Goswami T."/>
            <person name="Rad R."/>
            <person name="Beausoleil S.A."/>
            <person name="Villen J."/>
            <person name="Haas W."/>
            <person name="Sowa M.E."/>
            <person name="Gygi S.P."/>
        </authorList>
    </citation>
    <scope>PHOSPHORYLATION [LARGE SCALE ANALYSIS] AT SER-308; SER-318 AND SER-407</scope>
    <scope>IDENTIFICATION BY MASS SPECTROMETRY [LARGE SCALE ANALYSIS]</scope>
    <source>
        <tissue>Brain</tissue>
        <tissue>Heart</tissue>
        <tissue>Kidney</tissue>
        <tissue>Lung</tissue>
        <tissue>Spleen</tissue>
    </source>
</reference>
<gene>
    <name type="primary">Cdr2l</name>
    <name type="synonym">Gm21</name>
</gene>
<keyword id="KW-0175">Coiled coil</keyword>
<keyword id="KW-0597">Phosphoprotein</keyword>
<keyword id="KW-1185">Reference proteome</keyword>
<feature type="chain" id="PRO_0000307235" description="Cerebellar degeneration-related protein 2-like">
    <location>
        <begin position="1"/>
        <end position="465"/>
    </location>
</feature>
<feature type="region of interest" description="Disordered" evidence="3">
    <location>
        <begin position="282"/>
        <end position="315"/>
    </location>
</feature>
<feature type="region of interest" description="Disordered" evidence="3">
    <location>
        <begin position="382"/>
        <end position="421"/>
    </location>
</feature>
<feature type="coiled-coil region" evidence="2">
    <location>
        <begin position="31"/>
        <end position="64"/>
    </location>
</feature>
<feature type="coiled-coil region" evidence="2">
    <location>
        <begin position="91"/>
        <end position="142"/>
    </location>
</feature>
<feature type="coiled-coil region" evidence="2">
    <location>
        <begin position="188"/>
        <end position="266"/>
    </location>
</feature>
<feature type="coiled-coil region" evidence="2">
    <location>
        <begin position="350"/>
        <end position="377"/>
    </location>
</feature>
<feature type="modified residue" description="Phosphoserine" evidence="5">
    <location>
        <position position="308"/>
    </location>
</feature>
<feature type="modified residue" description="Phosphoserine" evidence="5">
    <location>
        <position position="318"/>
    </location>
</feature>
<feature type="modified residue" description="Phosphoserine" evidence="1">
    <location>
        <position position="344"/>
    </location>
</feature>
<feature type="modified residue" description="Phosphoserine" evidence="5">
    <location>
        <position position="407"/>
    </location>
</feature>
<evidence type="ECO:0000250" key="1">
    <source>
        <dbReference type="UniProtKB" id="Q86X02"/>
    </source>
</evidence>
<evidence type="ECO:0000255" key="2"/>
<evidence type="ECO:0000256" key="3">
    <source>
        <dbReference type="SAM" id="MobiDB-lite"/>
    </source>
</evidence>
<evidence type="ECO:0000305" key="4"/>
<evidence type="ECO:0007744" key="5">
    <source>
    </source>
</evidence>
<proteinExistence type="evidence at protein level"/>
<accession>A2A6T1</accession>
<sequence length="465" mass="53213">MRRAAGMEDYSAEEEESWYDHQDLEQDLHLAAELGKTLLERNKELEESLQQMYSTNEEQVHEIEYLTKQLDTLRLVNEQHAKVYEQLDLTARDLELTNQRLVMESKAAQQKIHGLTETIERLQSQVEELQAQVEQLRGLEQLRIRREKRERRRTIHTFPCLKELCTSSRCEDAFRLHSSSLELGPRPLEQENERLQTLVGVLRSQVSQERQRKERAEREYTVVLQEYTELERQLCEMEGCRLRVQELEAELLELQQMKQAKTYLLAREEHLAEALLAPLTQAPEADDPQPGSGDDSNAQDGVSSPAASPSHAVRKSCSDTALNAIVAKDPASRHAGNLTLHANSVRRRGMSILREVDEQYHALLEKYEELLSKCRQHGAGVRHAGVQTSRPISRDSSWRDLLGGEESPGEGKAGEKSLSQHVEAVDKRLEQSQPEYKALFKEIFARIQKTKADINATKVKTHSSK</sequence>
<comment type="similarity">
    <text evidence="4">Belongs to the CDR2 family.</text>
</comment>